<protein>
    <recommendedName>
        <fullName>Relaxin receptor 1</fullName>
    </recommendedName>
    <alternativeName>
        <fullName>Leucine-rich repeat-containing G-protein coupled receptor 7</fullName>
    </alternativeName>
    <alternativeName>
        <fullName>Relaxin family peptide receptor 1</fullName>
    </alternativeName>
</protein>
<reference key="1">
    <citation type="journal article" date="2004" name="Clin. Exp. Pharmacol. Physiol.">
        <title>Identification and characterization of the mouse and rat relaxin receptors as the novel orthologues of human leucine-rich repeat-containing G-protein-coupled receptor 7.</title>
        <authorList>
            <person name="Scott D.J."/>
            <person name="Layfield S."/>
            <person name="Riesewijk A."/>
            <person name="Morita H."/>
            <person name="Tregear G.W."/>
            <person name="Bathgate R.A.D."/>
        </authorList>
    </citation>
    <scope>NUCLEOTIDE SEQUENCE [MRNA]</scope>
    <scope>FUNCTION</scope>
    <scope>SUBCELLULAR LOCATION</scope>
    <scope>TISSUE SPECIFICITY</scope>
</reference>
<accession>Q6R6I6</accession>
<comment type="function">
    <text evidence="1 6">Receptor for relaxins. The activity of this receptor is mediated by G proteins leading to stimulation of adenylate cyclase and an increase of cAMP. Binding of the ligand may also activate a tyrosine kinase pathway that inhibits the activity of a phosphodiesterase that degrades cAMP (By similarity).</text>
</comment>
<comment type="subunit">
    <text evidence="2">Interacts with C1QTNF8.</text>
</comment>
<comment type="subcellular location">
    <subcellularLocation>
        <location evidence="6">Cell membrane</location>
        <topology evidence="6">Multi-pass membrane protein</topology>
    </subcellularLocation>
</comment>
<comment type="tissue specificity">
    <text evidence="6">Detected in brain cortex, and at low levels in testis.</text>
</comment>
<comment type="similarity">
    <text evidence="5">Belongs to the G-protein coupled receptor 1 family.</text>
</comment>
<sequence>MTSGPFFFCVFIIGRYFTLGNAQDVSCPLGSFPCGNISKCLPQLLHCNGVDDCGNQADEDNCGDNNGWSLQLDKYFANYYKLTSTNSIEAETSECLVGSVPMHCLCRDLELDCDEANLRAVPSVSSNVTVMSLQWNFIRTLPPNSFRKYHDLQKLCLQNNKIRSVSVSAFRGLHSLTKLYLSHNRITFLKPGVFEDLHRLEWLIIEDNHLSRISPLTFYGLNSLILLVLMNNALTRLPDKPLCQHMPRLHWLDFEGNRIHNLRNLTFISCNNLTVLVMRKNKINHLNEHAFTHLQKLDELDLGSNKIENLPPNIFKDLKELSQLNISYNPIQKIEVNQFDYLAKLKSLSLEGIEISNIQQRMFRPLINLSHIYFKKFQYCGYAPHVRSCKPNTDGISSLENLLASIIQRVFVWVVSAITCFGNIFVICMRPYIRSENKLHAMSIMSLCCADCLMGVYLFVIGAFDLKFRGEYRKHAQPWMESVHCQFMGSLAVLSTEVSVLLLTFLTLEKYICIVYPFRCLRPRKCRTVAVLIFIWITGFIVAFAPLGNKEFFKNYYGTNGVCFPLHSEDTGSTGAQIYSVVIFLGINLVAFIIIVFSYGSMFYSVHQSTITATEIQKQVKKEMILAKRFFFIVFTDALCWIPIFILKFLSLIRVEIPDTITSWVVIFILPINSALNPIIYTLTTRPFKEMIHQLWYNYRQRRSVDRKGTQKAYTPSFIWVEMWPLQEMSTEFMKPDAFTDPCDLSLVSRSSRLNSYS</sequence>
<evidence type="ECO:0000250" key="1"/>
<evidence type="ECO:0000250" key="2">
    <source>
        <dbReference type="UniProtKB" id="Q9HBX9"/>
    </source>
</evidence>
<evidence type="ECO:0000255" key="3"/>
<evidence type="ECO:0000255" key="4">
    <source>
        <dbReference type="PROSITE-ProRule" id="PRU00124"/>
    </source>
</evidence>
<evidence type="ECO:0000255" key="5">
    <source>
        <dbReference type="PROSITE-ProRule" id="PRU00521"/>
    </source>
</evidence>
<evidence type="ECO:0000269" key="6">
    <source>
    </source>
</evidence>
<proteinExistence type="evidence at transcript level"/>
<organism>
    <name type="scientific">Rattus norvegicus</name>
    <name type="common">Rat</name>
    <dbReference type="NCBI Taxonomy" id="10116"/>
    <lineage>
        <taxon>Eukaryota</taxon>
        <taxon>Metazoa</taxon>
        <taxon>Chordata</taxon>
        <taxon>Craniata</taxon>
        <taxon>Vertebrata</taxon>
        <taxon>Euteleostomi</taxon>
        <taxon>Mammalia</taxon>
        <taxon>Eutheria</taxon>
        <taxon>Euarchontoglires</taxon>
        <taxon>Glires</taxon>
        <taxon>Rodentia</taxon>
        <taxon>Myomorpha</taxon>
        <taxon>Muroidea</taxon>
        <taxon>Muridae</taxon>
        <taxon>Murinae</taxon>
        <taxon>Rattus</taxon>
    </lineage>
</organism>
<feature type="chain" id="PRO_0000312669" description="Relaxin receptor 1">
    <location>
        <begin position="1"/>
        <end position="758"/>
    </location>
</feature>
<feature type="topological domain" description="Extracellular" evidence="3">
    <location>
        <begin position="1"/>
        <end position="408"/>
    </location>
</feature>
<feature type="transmembrane region" description="Helical; Name=1" evidence="3">
    <location>
        <begin position="409"/>
        <end position="429"/>
    </location>
</feature>
<feature type="topological domain" description="Cytoplasmic" evidence="3">
    <location>
        <begin position="430"/>
        <end position="443"/>
    </location>
</feature>
<feature type="transmembrane region" description="Helical; Name=2" evidence="3">
    <location>
        <begin position="444"/>
        <end position="464"/>
    </location>
</feature>
<feature type="topological domain" description="Extracellular" evidence="3">
    <location>
        <begin position="465"/>
        <end position="486"/>
    </location>
</feature>
<feature type="transmembrane region" description="Helical; Name=3" evidence="3">
    <location>
        <begin position="487"/>
        <end position="507"/>
    </location>
</feature>
<feature type="topological domain" description="Cytoplasmic" evidence="3">
    <location>
        <begin position="508"/>
        <end position="527"/>
    </location>
</feature>
<feature type="transmembrane region" description="Helical; Name=4" evidence="3">
    <location>
        <begin position="528"/>
        <end position="548"/>
    </location>
</feature>
<feature type="topological domain" description="Extracellular" evidence="3">
    <location>
        <begin position="549"/>
        <end position="577"/>
    </location>
</feature>
<feature type="transmembrane region" description="Helical; Name=5" evidence="3">
    <location>
        <begin position="578"/>
        <end position="598"/>
    </location>
</feature>
<feature type="topological domain" description="Cytoplasmic" evidence="3">
    <location>
        <begin position="599"/>
        <end position="629"/>
    </location>
</feature>
<feature type="transmembrane region" description="Helical; Name=6" evidence="3">
    <location>
        <begin position="630"/>
        <end position="650"/>
    </location>
</feature>
<feature type="topological domain" description="Extracellular" evidence="3">
    <location>
        <begin position="651"/>
        <end position="660"/>
    </location>
</feature>
<feature type="transmembrane region" description="Helical; Name=7" evidence="3">
    <location>
        <begin position="661"/>
        <end position="681"/>
    </location>
</feature>
<feature type="topological domain" description="Cytoplasmic" evidence="3">
    <location>
        <begin position="682"/>
        <end position="758"/>
    </location>
</feature>
<feature type="domain" description="LDL-receptor class A" evidence="4">
    <location>
        <begin position="26"/>
        <end position="63"/>
    </location>
</feature>
<feature type="repeat" description="LRR 1">
    <location>
        <begin position="105"/>
        <end position="125"/>
    </location>
</feature>
<feature type="repeat" description="LRR 2">
    <location>
        <begin position="126"/>
        <end position="148"/>
    </location>
</feature>
<feature type="repeat" description="LRR 3">
    <location>
        <begin position="149"/>
        <end position="172"/>
    </location>
</feature>
<feature type="repeat" description="LRR 4">
    <location>
        <begin position="173"/>
        <end position="196"/>
    </location>
</feature>
<feature type="repeat" description="LRR 5">
    <location>
        <begin position="198"/>
        <end position="220"/>
    </location>
</feature>
<feature type="repeat" description="LRR 6">
    <location>
        <begin position="221"/>
        <end position="244"/>
    </location>
</feature>
<feature type="repeat" description="LRR 7">
    <location>
        <begin position="246"/>
        <end position="269"/>
    </location>
</feature>
<feature type="repeat" description="LRR 8">
    <location>
        <begin position="270"/>
        <end position="293"/>
    </location>
</feature>
<feature type="repeat" description="LRR 9">
    <location>
        <begin position="294"/>
        <end position="317"/>
    </location>
</feature>
<feature type="repeat" description="LRR 10">
    <location>
        <begin position="319"/>
        <end position="341"/>
    </location>
</feature>
<feature type="repeat" description="LRR 11">
    <location>
        <begin position="342"/>
        <end position="365"/>
    </location>
</feature>
<feature type="binding site" evidence="1">
    <location>
        <position position="45"/>
    </location>
    <ligand>
        <name>Ca(2+)</name>
        <dbReference type="ChEBI" id="CHEBI:29108"/>
    </ligand>
</feature>
<feature type="binding site" evidence="1">
    <location>
        <position position="48"/>
    </location>
    <ligand>
        <name>Ca(2+)</name>
        <dbReference type="ChEBI" id="CHEBI:29108"/>
    </ligand>
</feature>
<feature type="binding site" evidence="1">
    <location>
        <position position="50"/>
    </location>
    <ligand>
        <name>Ca(2+)</name>
        <dbReference type="ChEBI" id="CHEBI:29108"/>
    </ligand>
</feature>
<feature type="binding site" evidence="1">
    <location>
        <position position="52"/>
    </location>
    <ligand>
        <name>Ca(2+)</name>
        <dbReference type="ChEBI" id="CHEBI:29108"/>
    </ligand>
</feature>
<feature type="binding site" evidence="1">
    <location>
        <position position="58"/>
    </location>
    <ligand>
        <name>Ca(2+)</name>
        <dbReference type="ChEBI" id="CHEBI:29108"/>
    </ligand>
</feature>
<feature type="binding site" evidence="1">
    <location>
        <position position="59"/>
    </location>
    <ligand>
        <name>Ca(2+)</name>
        <dbReference type="ChEBI" id="CHEBI:29108"/>
    </ligand>
</feature>
<feature type="glycosylation site" description="N-linked (GlcNAc...) asparagine" evidence="3">
    <location>
        <position position="36"/>
    </location>
</feature>
<feature type="glycosylation site" description="N-linked (GlcNAc...) asparagine" evidence="3">
    <location>
        <position position="127"/>
    </location>
</feature>
<feature type="glycosylation site" description="N-linked (GlcNAc...) asparagine" evidence="3">
    <location>
        <position position="264"/>
    </location>
</feature>
<feature type="glycosylation site" description="N-linked (GlcNAc...) asparagine" evidence="3">
    <location>
        <position position="272"/>
    </location>
</feature>
<feature type="glycosylation site" description="N-linked (GlcNAc...) asparagine" evidence="3">
    <location>
        <position position="325"/>
    </location>
</feature>
<feature type="glycosylation site" description="N-linked (GlcNAc...) asparagine" evidence="3">
    <location>
        <position position="368"/>
    </location>
</feature>
<feature type="disulfide bond" evidence="1">
    <location>
        <begin position="27"/>
        <end position="40"/>
    </location>
</feature>
<feature type="disulfide bond" evidence="1">
    <location>
        <begin position="34"/>
        <end position="53"/>
    </location>
</feature>
<feature type="disulfide bond" evidence="1">
    <location>
        <begin position="47"/>
        <end position="62"/>
    </location>
</feature>
<feature type="disulfide bond" evidence="1">
    <location>
        <begin position="485"/>
        <end position="563"/>
    </location>
</feature>
<keyword id="KW-0106">Calcium</keyword>
<keyword id="KW-1003">Cell membrane</keyword>
<keyword id="KW-1015">Disulfide bond</keyword>
<keyword id="KW-0297">G-protein coupled receptor</keyword>
<keyword id="KW-0325">Glycoprotein</keyword>
<keyword id="KW-0433">Leucine-rich repeat</keyword>
<keyword id="KW-0472">Membrane</keyword>
<keyword id="KW-0479">Metal-binding</keyword>
<keyword id="KW-0675">Receptor</keyword>
<keyword id="KW-1185">Reference proteome</keyword>
<keyword id="KW-0677">Repeat</keyword>
<keyword id="KW-0807">Transducer</keyword>
<keyword id="KW-0812">Transmembrane</keyword>
<keyword id="KW-1133">Transmembrane helix</keyword>
<name>RXFP1_RAT</name>
<gene>
    <name type="primary">Rxfp1</name>
    <name type="synonym">Lgr7</name>
</gene>
<dbReference type="EMBL" id="AY509976">
    <property type="protein sequence ID" value="AAR97516.1"/>
    <property type="molecule type" value="mRNA"/>
</dbReference>
<dbReference type="RefSeq" id="NP_958820.1">
    <property type="nucleotide sequence ID" value="NM_201417.1"/>
</dbReference>
<dbReference type="SMR" id="Q6R6I6"/>
<dbReference type="FunCoup" id="Q6R6I6">
    <property type="interactions" value="44"/>
</dbReference>
<dbReference type="STRING" id="10116.ENSRNOP00000033541"/>
<dbReference type="BindingDB" id="Q6R6I6"/>
<dbReference type="ChEMBL" id="CHEMBL4739859"/>
<dbReference type="GuidetoPHARMACOLOGY" id="351"/>
<dbReference type="GlyCosmos" id="Q6R6I6">
    <property type="glycosylation" value="6 sites, No reported glycans"/>
</dbReference>
<dbReference type="GlyGen" id="Q6R6I6">
    <property type="glycosylation" value="6 sites"/>
</dbReference>
<dbReference type="PhosphoSitePlus" id="Q6R6I6"/>
<dbReference type="PaxDb" id="10116-ENSRNOP00000033541"/>
<dbReference type="GeneID" id="295144"/>
<dbReference type="KEGG" id="rno:295144"/>
<dbReference type="UCSC" id="RGD:1302973">
    <property type="organism name" value="rat"/>
</dbReference>
<dbReference type="AGR" id="RGD:1302973"/>
<dbReference type="CTD" id="59350"/>
<dbReference type="RGD" id="1302973">
    <property type="gene designation" value="Rxfp1"/>
</dbReference>
<dbReference type="eggNOG" id="KOG0619">
    <property type="taxonomic scope" value="Eukaryota"/>
</dbReference>
<dbReference type="eggNOG" id="KOG2087">
    <property type="taxonomic scope" value="Eukaryota"/>
</dbReference>
<dbReference type="InParanoid" id="Q6R6I6"/>
<dbReference type="PhylomeDB" id="Q6R6I6"/>
<dbReference type="Reactome" id="R-RNO-444821">
    <property type="pathway name" value="Relaxin receptors"/>
</dbReference>
<dbReference type="PRO" id="PR:Q6R6I6"/>
<dbReference type="Proteomes" id="UP000002494">
    <property type="component" value="Unplaced"/>
</dbReference>
<dbReference type="GO" id="GO:0005886">
    <property type="term" value="C:plasma membrane"/>
    <property type="evidence" value="ECO:0000318"/>
    <property type="project" value="GO_Central"/>
</dbReference>
<dbReference type="GO" id="GO:0008528">
    <property type="term" value="F:G protein-coupled peptide receptor activity"/>
    <property type="evidence" value="ECO:0000318"/>
    <property type="project" value="GO_Central"/>
</dbReference>
<dbReference type="GO" id="GO:0004930">
    <property type="term" value="F:G protein-coupled receptor activity"/>
    <property type="evidence" value="ECO:0000314"/>
    <property type="project" value="RGD"/>
</dbReference>
<dbReference type="GO" id="GO:0042562">
    <property type="term" value="F:hormone binding"/>
    <property type="evidence" value="ECO:0000266"/>
    <property type="project" value="RGD"/>
</dbReference>
<dbReference type="GO" id="GO:0046872">
    <property type="term" value="F:metal ion binding"/>
    <property type="evidence" value="ECO:0007669"/>
    <property type="project" value="UniProtKB-KW"/>
</dbReference>
<dbReference type="GO" id="GO:0007189">
    <property type="term" value="P:adenylate cyclase-activating G protein-coupled receptor signaling pathway"/>
    <property type="evidence" value="ECO:0000315"/>
    <property type="project" value="RGD"/>
</dbReference>
<dbReference type="GO" id="GO:0007188">
    <property type="term" value="P:adenylate cyclase-modulating G protein-coupled receptor signaling pathway"/>
    <property type="evidence" value="ECO:0000266"/>
    <property type="project" value="RGD"/>
</dbReference>
<dbReference type="GO" id="GO:0030198">
    <property type="term" value="P:extracellular matrix organization"/>
    <property type="evidence" value="ECO:0000266"/>
    <property type="project" value="RGD"/>
</dbReference>
<dbReference type="GO" id="GO:0009755">
    <property type="term" value="P:hormone-mediated signaling pathway"/>
    <property type="evidence" value="ECO:0000318"/>
    <property type="project" value="GO_Central"/>
</dbReference>
<dbReference type="GO" id="GO:0060427">
    <property type="term" value="P:lung connective tissue development"/>
    <property type="evidence" value="ECO:0000266"/>
    <property type="project" value="RGD"/>
</dbReference>
<dbReference type="GO" id="GO:0036446">
    <property type="term" value="P:myofibroblast differentiation"/>
    <property type="evidence" value="ECO:0000266"/>
    <property type="project" value="RGD"/>
</dbReference>
<dbReference type="GO" id="GO:0060658">
    <property type="term" value="P:nipple morphogenesis"/>
    <property type="evidence" value="ECO:0000266"/>
    <property type="project" value="RGD"/>
</dbReference>
<dbReference type="GO" id="GO:0007567">
    <property type="term" value="P:parturition"/>
    <property type="evidence" value="ECO:0000266"/>
    <property type="project" value="RGD"/>
</dbReference>
<dbReference type="CDD" id="cd00112">
    <property type="entry name" value="LDLa"/>
    <property type="match status" value="1"/>
</dbReference>
<dbReference type="FunFam" id="1.20.1070.10:FF:000023">
    <property type="entry name" value="Relaxin family peptide receptor 1"/>
    <property type="match status" value="1"/>
</dbReference>
<dbReference type="FunFam" id="3.80.10.10:FF:000162">
    <property type="entry name" value="Relaxin family peptide receptor 1"/>
    <property type="match status" value="1"/>
</dbReference>
<dbReference type="FunFam" id="3.80.10.10:FF:000203">
    <property type="entry name" value="Relaxin family peptide receptor 1"/>
    <property type="match status" value="1"/>
</dbReference>
<dbReference type="FunFam" id="4.10.400.10:FF:000014">
    <property type="entry name" value="Relaxin family peptide receptor 1"/>
    <property type="match status" value="1"/>
</dbReference>
<dbReference type="Gene3D" id="4.10.400.10">
    <property type="entry name" value="Low-density Lipoprotein Receptor"/>
    <property type="match status" value="1"/>
</dbReference>
<dbReference type="Gene3D" id="1.20.1070.10">
    <property type="entry name" value="Rhodopsin 7-helix transmembrane proteins"/>
    <property type="match status" value="1"/>
</dbReference>
<dbReference type="Gene3D" id="3.80.10.10">
    <property type="entry name" value="Ribonuclease Inhibitor"/>
    <property type="match status" value="2"/>
</dbReference>
<dbReference type="InterPro" id="IPR000276">
    <property type="entry name" value="GPCR_Rhodpsn"/>
</dbReference>
<dbReference type="InterPro" id="IPR017452">
    <property type="entry name" value="GPCR_Rhodpsn_7TM"/>
</dbReference>
<dbReference type="InterPro" id="IPR036055">
    <property type="entry name" value="LDL_receptor-like_sf"/>
</dbReference>
<dbReference type="InterPro" id="IPR023415">
    <property type="entry name" value="LDLR_class-A_CS"/>
</dbReference>
<dbReference type="InterPro" id="IPR002172">
    <property type="entry name" value="LDrepeatLR_classA_rpt"/>
</dbReference>
<dbReference type="InterPro" id="IPR001611">
    <property type="entry name" value="Leu-rich_rpt"/>
</dbReference>
<dbReference type="InterPro" id="IPR003591">
    <property type="entry name" value="Leu-rich_rpt_typical-subtyp"/>
</dbReference>
<dbReference type="InterPro" id="IPR032675">
    <property type="entry name" value="LRR_dom_sf"/>
</dbReference>
<dbReference type="InterPro" id="IPR008112">
    <property type="entry name" value="Relaxin_rcpt"/>
</dbReference>
<dbReference type="PANTHER" id="PTHR24372">
    <property type="entry name" value="GLYCOPROTEIN HORMONE RECEPTOR"/>
    <property type="match status" value="1"/>
</dbReference>
<dbReference type="PANTHER" id="PTHR24372:SF68">
    <property type="entry name" value="RELAXIN RECEPTOR 1"/>
    <property type="match status" value="1"/>
</dbReference>
<dbReference type="Pfam" id="PF00001">
    <property type="entry name" value="7tm_1"/>
    <property type="match status" value="1"/>
</dbReference>
<dbReference type="Pfam" id="PF00057">
    <property type="entry name" value="Ldl_recept_a"/>
    <property type="match status" value="1"/>
</dbReference>
<dbReference type="Pfam" id="PF13855">
    <property type="entry name" value="LRR_8"/>
    <property type="match status" value="2"/>
</dbReference>
<dbReference type="PRINTS" id="PR00237">
    <property type="entry name" value="GPCRRHODOPSN"/>
</dbReference>
<dbReference type="PRINTS" id="PR01739">
    <property type="entry name" value="RELAXINR"/>
</dbReference>
<dbReference type="SMART" id="SM00192">
    <property type="entry name" value="LDLa"/>
    <property type="match status" value="1"/>
</dbReference>
<dbReference type="SMART" id="SM00365">
    <property type="entry name" value="LRR_SD22"/>
    <property type="match status" value="5"/>
</dbReference>
<dbReference type="SMART" id="SM00369">
    <property type="entry name" value="LRR_TYP"/>
    <property type="match status" value="10"/>
</dbReference>
<dbReference type="SUPFAM" id="SSF81321">
    <property type="entry name" value="Family A G protein-coupled receptor-like"/>
    <property type="match status" value="1"/>
</dbReference>
<dbReference type="SUPFAM" id="SSF52058">
    <property type="entry name" value="L domain-like"/>
    <property type="match status" value="1"/>
</dbReference>
<dbReference type="SUPFAM" id="SSF57424">
    <property type="entry name" value="LDL receptor-like module"/>
    <property type="match status" value="1"/>
</dbReference>
<dbReference type="PROSITE" id="PS50262">
    <property type="entry name" value="G_PROTEIN_RECEP_F1_2"/>
    <property type="match status" value="1"/>
</dbReference>
<dbReference type="PROSITE" id="PS01209">
    <property type="entry name" value="LDLRA_1"/>
    <property type="match status" value="1"/>
</dbReference>
<dbReference type="PROSITE" id="PS50068">
    <property type="entry name" value="LDLRA_2"/>
    <property type="match status" value="1"/>
</dbReference>
<dbReference type="PROSITE" id="PS51450">
    <property type="entry name" value="LRR"/>
    <property type="match status" value="10"/>
</dbReference>